<feature type="chain" id="PRO_1000058138" description="DNA mismatch repair protein MutL">
    <location>
        <begin position="1"/>
        <end position="644"/>
    </location>
</feature>
<feature type="region of interest" description="Disordered" evidence="2">
    <location>
        <begin position="338"/>
        <end position="390"/>
    </location>
</feature>
<feature type="region of interest" description="Disordered" evidence="2">
    <location>
        <begin position="416"/>
        <end position="445"/>
    </location>
</feature>
<feature type="compositionally biased region" description="Low complexity" evidence="2">
    <location>
        <begin position="349"/>
        <end position="366"/>
    </location>
</feature>
<feature type="compositionally biased region" description="Low complexity" evidence="2">
    <location>
        <begin position="416"/>
        <end position="427"/>
    </location>
</feature>
<dbReference type="EMBL" id="CP000285">
    <property type="protein sequence ID" value="ABE58630.1"/>
    <property type="molecule type" value="Genomic_DNA"/>
</dbReference>
<dbReference type="RefSeq" id="WP_011506576.1">
    <property type="nucleotide sequence ID" value="NC_007963.1"/>
</dbReference>
<dbReference type="SMR" id="Q1QY28"/>
<dbReference type="STRING" id="290398.Csal_1275"/>
<dbReference type="GeneID" id="95334015"/>
<dbReference type="KEGG" id="csa:Csal_1275"/>
<dbReference type="eggNOG" id="COG0323">
    <property type="taxonomic scope" value="Bacteria"/>
</dbReference>
<dbReference type="HOGENOM" id="CLU_004131_4_2_6"/>
<dbReference type="OrthoDB" id="9763467at2"/>
<dbReference type="Proteomes" id="UP000000239">
    <property type="component" value="Chromosome"/>
</dbReference>
<dbReference type="GO" id="GO:0032300">
    <property type="term" value="C:mismatch repair complex"/>
    <property type="evidence" value="ECO:0007669"/>
    <property type="project" value="InterPro"/>
</dbReference>
<dbReference type="GO" id="GO:0005524">
    <property type="term" value="F:ATP binding"/>
    <property type="evidence" value="ECO:0007669"/>
    <property type="project" value="InterPro"/>
</dbReference>
<dbReference type="GO" id="GO:0016887">
    <property type="term" value="F:ATP hydrolysis activity"/>
    <property type="evidence" value="ECO:0007669"/>
    <property type="project" value="InterPro"/>
</dbReference>
<dbReference type="GO" id="GO:0140664">
    <property type="term" value="F:ATP-dependent DNA damage sensor activity"/>
    <property type="evidence" value="ECO:0007669"/>
    <property type="project" value="InterPro"/>
</dbReference>
<dbReference type="GO" id="GO:0030983">
    <property type="term" value="F:mismatched DNA binding"/>
    <property type="evidence" value="ECO:0007669"/>
    <property type="project" value="InterPro"/>
</dbReference>
<dbReference type="GO" id="GO:0006298">
    <property type="term" value="P:mismatch repair"/>
    <property type="evidence" value="ECO:0007669"/>
    <property type="project" value="UniProtKB-UniRule"/>
</dbReference>
<dbReference type="CDD" id="cd16926">
    <property type="entry name" value="HATPase_MutL-MLH-PMS-like"/>
    <property type="match status" value="1"/>
</dbReference>
<dbReference type="CDD" id="cd03482">
    <property type="entry name" value="MutL_Trans_MutL"/>
    <property type="match status" value="1"/>
</dbReference>
<dbReference type="FunFam" id="3.30.230.10:FF:000013">
    <property type="entry name" value="DNA mismatch repair endonuclease MutL"/>
    <property type="match status" value="1"/>
</dbReference>
<dbReference type="FunFam" id="3.30.565.10:FF:000003">
    <property type="entry name" value="DNA mismatch repair endonuclease MutL"/>
    <property type="match status" value="1"/>
</dbReference>
<dbReference type="Gene3D" id="3.30.230.10">
    <property type="match status" value="1"/>
</dbReference>
<dbReference type="Gene3D" id="3.30.565.10">
    <property type="entry name" value="Histidine kinase-like ATPase, C-terminal domain"/>
    <property type="match status" value="1"/>
</dbReference>
<dbReference type="Gene3D" id="3.30.1540.20">
    <property type="entry name" value="MutL, C-terminal domain, dimerisation subdomain"/>
    <property type="match status" value="1"/>
</dbReference>
<dbReference type="Gene3D" id="3.30.1370.100">
    <property type="entry name" value="MutL, C-terminal domain, regulatory subdomain"/>
    <property type="match status" value="1"/>
</dbReference>
<dbReference type="HAMAP" id="MF_00149">
    <property type="entry name" value="DNA_mis_repair"/>
    <property type="match status" value="1"/>
</dbReference>
<dbReference type="InterPro" id="IPR014762">
    <property type="entry name" value="DNA_mismatch_repair_CS"/>
</dbReference>
<dbReference type="InterPro" id="IPR020667">
    <property type="entry name" value="DNA_mismatch_repair_MutL"/>
</dbReference>
<dbReference type="InterPro" id="IPR013507">
    <property type="entry name" value="DNA_mismatch_S5_2-like"/>
</dbReference>
<dbReference type="InterPro" id="IPR036890">
    <property type="entry name" value="HATPase_C_sf"/>
</dbReference>
<dbReference type="InterPro" id="IPR002099">
    <property type="entry name" value="MutL/Mlh/PMS"/>
</dbReference>
<dbReference type="InterPro" id="IPR038973">
    <property type="entry name" value="MutL/Mlh/Pms-like"/>
</dbReference>
<dbReference type="InterPro" id="IPR014790">
    <property type="entry name" value="MutL_C"/>
</dbReference>
<dbReference type="InterPro" id="IPR042120">
    <property type="entry name" value="MutL_C_dimsub"/>
</dbReference>
<dbReference type="InterPro" id="IPR042121">
    <property type="entry name" value="MutL_C_regsub"/>
</dbReference>
<dbReference type="InterPro" id="IPR037198">
    <property type="entry name" value="MutL_C_sf"/>
</dbReference>
<dbReference type="InterPro" id="IPR020568">
    <property type="entry name" value="Ribosomal_Su5_D2-typ_SF"/>
</dbReference>
<dbReference type="InterPro" id="IPR014721">
    <property type="entry name" value="Ribsml_uS5_D2-typ_fold_subgr"/>
</dbReference>
<dbReference type="NCBIfam" id="TIGR00585">
    <property type="entry name" value="mutl"/>
    <property type="match status" value="1"/>
</dbReference>
<dbReference type="NCBIfam" id="NF000949">
    <property type="entry name" value="PRK00095.1-2"/>
    <property type="match status" value="1"/>
</dbReference>
<dbReference type="PANTHER" id="PTHR10073">
    <property type="entry name" value="DNA MISMATCH REPAIR PROTEIN MLH, PMS, MUTL"/>
    <property type="match status" value="1"/>
</dbReference>
<dbReference type="PANTHER" id="PTHR10073:SF12">
    <property type="entry name" value="DNA MISMATCH REPAIR PROTEIN MLH1"/>
    <property type="match status" value="1"/>
</dbReference>
<dbReference type="Pfam" id="PF01119">
    <property type="entry name" value="DNA_mis_repair"/>
    <property type="match status" value="1"/>
</dbReference>
<dbReference type="Pfam" id="PF13589">
    <property type="entry name" value="HATPase_c_3"/>
    <property type="match status" value="1"/>
</dbReference>
<dbReference type="Pfam" id="PF08676">
    <property type="entry name" value="MutL_C"/>
    <property type="match status" value="1"/>
</dbReference>
<dbReference type="SMART" id="SM01340">
    <property type="entry name" value="DNA_mis_repair"/>
    <property type="match status" value="1"/>
</dbReference>
<dbReference type="SMART" id="SM00853">
    <property type="entry name" value="MutL_C"/>
    <property type="match status" value="1"/>
</dbReference>
<dbReference type="SUPFAM" id="SSF55874">
    <property type="entry name" value="ATPase domain of HSP90 chaperone/DNA topoisomerase II/histidine kinase"/>
    <property type="match status" value="1"/>
</dbReference>
<dbReference type="SUPFAM" id="SSF118116">
    <property type="entry name" value="DNA mismatch repair protein MutL"/>
    <property type="match status" value="1"/>
</dbReference>
<dbReference type="SUPFAM" id="SSF54211">
    <property type="entry name" value="Ribosomal protein S5 domain 2-like"/>
    <property type="match status" value="1"/>
</dbReference>
<dbReference type="PROSITE" id="PS00058">
    <property type="entry name" value="DNA_MISMATCH_REPAIR_1"/>
    <property type="match status" value="1"/>
</dbReference>
<accession>Q1QY28</accession>
<proteinExistence type="inferred from homology"/>
<protein>
    <recommendedName>
        <fullName evidence="1">DNA mismatch repair protein MutL</fullName>
    </recommendedName>
</protein>
<sequence length="644" mass="71509">MTHTRRIHILDPRLANQIAAGEVVERPASVVKELVENAIDAGSQRIEIDLESGGARLIRVRDDGRGIDQEDLPLALSRHATSKIASLDDLEGVDSLGFRGEALASISSVSRLELISNTHDEPSDGWRVVAEGRQMEPRVTPAPHPRGSSVVVRDLFFNTPARRKFLRTEKTEFGHVEEAFRRLALSRYDIGWILRHNQKVVHQLRAGDASTSMERRVGALLGRKFLENALHVDIEATGLRLWGWVGLPTHSRAQADQQYFFVNGRVVRDRLVAHAVRQAYRDVMFHGRHPVFVLYLELDPHVVDVNVHPTKHEVRFRDGRLVHDFLFSSLHRALADVRPNATSTEGGDEATPSTDATTATAAEASAGQAEPRWQQQGMALAAGQERERPAAHRVREFMAGYRALHPEHEASLLTPQPQEAAEEAAGTPAPPASSSPAMAETDDTQAPPLGYAVAQLHGVYILSQTERGLVVVDMHAAHERITYERMKQQVHGDGQALGRLQTQPLLVPVSIAASAREVETAENERATFERLGVELDVAGPETLLVRQVPVLLGNADVEALIHDMLGDLERFGRSDRLEVHINELLSSMACHGSVRANRRLTVPEMNALLRDMERTERSGQCNHGRPTWTEMSMHELDKLFLRGQ</sequence>
<comment type="function">
    <text evidence="1">This protein is involved in the repair of mismatches in DNA. It is required for dam-dependent methyl-directed DNA mismatch repair. May act as a 'molecular matchmaker', a protein that promotes the formation of a stable complex between two or more DNA-binding proteins in an ATP-dependent manner without itself being part of a final effector complex.</text>
</comment>
<comment type="similarity">
    <text evidence="1">Belongs to the DNA mismatch repair MutL/HexB family.</text>
</comment>
<name>MUTL_CHRSD</name>
<gene>
    <name evidence="1" type="primary">mutL</name>
    <name type="ordered locus">Csal_1275</name>
</gene>
<organism>
    <name type="scientific">Chromohalobacter salexigens (strain ATCC BAA-138 / DSM 3043 / CIP 106854 / NCIMB 13768 / 1H11)</name>
    <dbReference type="NCBI Taxonomy" id="290398"/>
    <lineage>
        <taxon>Bacteria</taxon>
        <taxon>Pseudomonadati</taxon>
        <taxon>Pseudomonadota</taxon>
        <taxon>Gammaproteobacteria</taxon>
        <taxon>Oceanospirillales</taxon>
        <taxon>Halomonadaceae</taxon>
        <taxon>Chromohalobacter</taxon>
    </lineage>
</organism>
<reference key="1">
    <citation type="journal article" date="2011" name="Stand. Genomic Sci.">
        <title>Complete genome sequence of the halophilic and highly halotolerant Chromohalobacter salexigens type strain (1H11(T)).</title>
        <authorList>
            <person name="Copeland A."/>
            <person name="O'Connor K."/>
            <person name="Lucas S."/>
            <person name="Lapidus A."/>
            <person name="Berry K.W."/>
            <person name="Detter J.C."/>
            <person name="Del Rio T.G."/>
            <person name="Hammon N."/>
            <person name="Dalin E."/>
            <person name="Tice H."/>
            <person name="Pitluck S."/>
            <person name="Bruce D."/>
            <person name="Goodwin L."/>
            <person name="Han C."/>
            <person name="Tapia R."/>
            <person name="Saunders E."/>
            <person name="Schmutz J."/>
            <person name="Brettin T."/>
            <person name="Larimer F."/>
            <person name="Land M."/>
            <person name="Hauser L."/>
            <person name="Vargas C."/>
            <person name="Nieto J.J."/>
            <person name="Kyrpides N.C."/>
            <person name="Ivanova N."/>
            <person name="Goker M."/>
            <person name="Klenk H.P."/>
            <person name="Csonka L.N."/>
            <person name="Woyke T."/>
        </authorList>
    </citation>
    <scope>NUCLEOTIDE SEQUENCE [LARGE SCALE GENOMIC DNA]</scope>
    <source>
        <strain>ATCC BAA-138 / DSM 3043 / CIP 106854 / NCIMB 13768 / 1H11</strain>
    </source>
</reference>
<keyword id="KW-0227">DNA damage</keyword>
<keyword id="KW-0234">DNA repair</keyword>
<keyword id="KW-1185">Reference proteome</keyword>
<evidence type="ECO:0000255" key="1">
    <source>
        <dbReference type="HAMAP-Rule" id="MF_00149"/>
    </source>
</evidence>
<evidence type="ECO:0000256" key="2">
    <source>
        <dbReference type="SAM" id="MobiDB-lite"/>
    </source>
</evidence>